<comment type="function">
    <text evidence="2">Catalyzes the reversible interconversion of serine and glycine with tetrahydrofolate (THF) serving as the one-carbon carrier. This reaction serves as the major source of one-carbon groups required for the biosynthesis of purines, thymidylate, methionine, and other important biomolecules. Also exhibits THF-independent aldolase activity toward beta-hydroxyamino acids, producing glycine and aldehydes, via a retro-aldol mechanism.</text>
</comment>
<comment type="catalytic activity">
    <reaction evidence="2">
        <text>(6R)-5,10-methylene-5,6,7,8-tetrahydrofolate + glycine + H2O = (6S)-5,6,7,8-tetrahydrofolate + L-serine</text>
        <dbReference type="Rhea" id="RHEA:15481"/>
        <dbReference type="ChEBI" id="CHEBI:15377"/>
        <dbReference type="ChEBI" id="CHEBI:15636"/>
        <dbReference type="ChEBI" id="CHEBI:33384"/>
        <dbReference type="ChEBI" id="CHEBI:57305"/>
        <dbReference type="ChEBI" id="CHEBI:57453"/>
        <dbReference type="EC" id="2.1.2.1"/>
    </reaction>
</comment>
<comment type="cofactor">
    <cofactor evidence="2">
        <name>pyridoxal 5'-phosphate</name>
        <dbReference type="ChEBI" id="CHEBI:597326"/>
    </cofactor>
</comment>
<comment type="pathway">
    <text evidence="2">One-carbon metabolism; tetrahydrofolate interconversion.</text>
</comment>
<comment type="pathway">
    <text evidence="2">Amino-acid biosynthesis; glycine biosynthesis; glycine from L-serine: step 1/1.</text>
</comment>
<comment type="subunit">
    <text evidence="2">Homodimer.</text>
</comment>
<comment type="subcellular location">
    <subcellularLocation>
        <location evidence="2">Cytoplasm</location>
    </subcellularLocation>
</comment>
<comment type="similarity">
    <text evidence="2 3">Belongs to the SHMT family.</text>
</comment>
<comment type="sequence caution" evidence="1">
    <conflict type="erroneous initiation">
        <sequence resource="EMBL-CDS" id="AAK45383"/>
    </conflict>
    <text>Truncated N-terminus.</text>
</comment>
<accession>P9WGI8</accession>
<accession>L0T5T8</accession>
<accession>O53441</accession>
<name>GLYA1_MYCTO</name>
<gene>
    <name evidence="2" type="primary">glyA1</name>
    <name type="synonym">glyA</name>
    <name type="ordered locus">MT1125</name>
</gene>
<dbReference type="EC" id="2.1.2.1" evidence="2"/>
<dbReference type="EMBL" id="AE000516">
    <property type="protein sequence ID" value="AAK45383.1"/>
    <property type="status" value="ALT_INIT"/>
    <property type="molecule type" value="Genomic_DNA"/>
</dbReference>
<dbReference type="PIR" id="C70896">
    <property type="entry name" value="C70896"/>
</dbReference>
<dbReference type="SMR" id="P9WGI8"/>
<dbReference type="KEGG" id="mtc:MT1125"/>
<dbReference type="HOGENOM" id="CLU_022477_2_1_11"/>
<dbReference type="UniPathway" id="UPA00193"/>
<dbReference type="UniPathway" id="UPA00288">
    <property type="reaction ID" value="UER01023"/>
</dbReference>
<dbReference type="Proteomes" id="UP000001020">
    <property type="component" value="Chromosome"/>
</dbReference>
<dbReference type="GO" id="GO:0005829">
    <property type="term" value="C:cytosol"/>
    <property type="evidence" value="ECO:0007669"/>
    <property type="project" value="TreeGrafter"/>
</dbReference>
<dbReference type="GO" id="GO:0004372">
    <property type="term" value="F:glycine hydroxymethyltransferase activity"/>
    <property type="evidence" value="ECO:0007669"/>
    <property type="project" value="UniProtKB-UniRule"/>
</dbReference>
<dbReference type="GO" id="GO:0030170">
    <property type="term" value="F:pyridoxal phosphate binding"/>
    <property type="evidence" value="ECO:0007669"/>
    <property type="project" value="UniProtKB-UniRule"/>
</dbReference>
<dbReference type="GO" id="GO:0019264">
    <property type="term" value="P:glycine biosynthetic process from serine"/>
    <property type="evidence" value="ECO:0007669"/>
    <property type="project" value="UniProtKB-UniRule"/>
</dbReference>
<dbReference type="GO" id="GO:0035999">
    <property type="term" value="P:tetrahydrofolate interconversion"/>
    <property type="evidence" value="ECO:0007669"/>
    <property type="project" value="UniProtKB-UniRule"/>
</dbReference>
<dbReference type="CDD" id="cd00378">
    <property type="entry name" value="SHMT"/>
    <property type="match status" value="1"/>
</dbReference>
<dbReference type="FunFam" id="3.40.640.10:FF:000001">
    <property type="entry name" value="Serine hydroxymethyltransferase"/>
    <property type="match status" value="1"/>
</dbReference>
<dbReference type="Gene3D" id="3.90.1150.10">
    <property type="entry name" value="Aspartate Aminotransferase, domain 1"/>
    <property type="match status" value="1"/>
</dbReference>
<dbReference type="Gene3D" id="3.40.640.10">
    <property type="entry name" value="Type I PLP-dependent aspartate aminotransferase-like (Major domain)"/>
    <property type="match status" value="1"/>
</dbReference>
<dbReference type="HAMAP" id="MF_00051">
    <property type="entry name" value="SHMT"/>
    <property type="match status" value="1"/>
</dbReference>
<dbReference type="InterPro" id="IPR015424">
    <property type="entry name" value="PyrdxlP-dep_Trfase"/>
</dbReference>
<dbReference type="InterPro" id="IPR015421">
    <property type="entry name" value="PyrdxlP-dep_Trfase_major"/>
</dbReference>
<dbReference type="InterPro" id="IPR015422">
    <property type="entry name" value="PyrdxlP-dep_Trfase_small"/>
</dbReference>
<dbReference type="InterPro" id="IPR001085">
    <property type="entry name" value="Ser_HO-MeTrfase"/>
</dbReference>
<dbReference type="InterPro" id="IPR049943">
    <property type="entry name" value="Ser_HO-MeTrfase-like"/>
</dbReference>
<dbReference type="InterPro" id="IPR019798">
    <property type="entry name" value="Ser_HO-MeTrfase_PLP_BS"/>
</dbReference>
<dbReference type="InterPro" id="IPR039429">
    <property type="entry name" value="SHMT-like_dom"/>
</dbReference>
<dbReference type="NCBIfam" id="NF000586">
    <property type="entry name" value="PRK00011.1"/>
    <property type="match status" value="1"/>
</dbReference>
<dbReference type="PANTHER" id="PTHR11680">
    <property type="entry name" value="SERINE HYDROXYMETHYLTRANSFERASE"/>
    <property type="match status" value="1"/>
</dbReference>
<dbReference type="PANTHER" id="PTHR11680:SF35">
    <property type="entry name" value="SERINE HYDROXYMETHYLTRANSFERASE 1"/>
    <property type="match status" value="1"/>
</dbReference>
<dbReference type="Pfam" id="PF00464">
    <property type="entry name" value="SHMT"/>
    <property type="match status" value="1"/>
</dbReference>
<dbReference type="PIRSF" id="PIRSF000412">
    <property type="entry name" value="SHMT"/>
    <property type="match status" value="1"/>
</dbReference>
<dbReference type="SUPFAM" id="SSF53383">
    <property type="entry name" value="PLP-dependent transferases"/>
    <property type="match status" value="1"/>
</dbReference>
<dbReference type="PROSITE" id="PS00096">
    <property type="entry name" value="SHMT"/>
    <property type="match status" value="1"/>
</dbReference>
<protein>
    <recommendedName>
        <fullName evidence="2">Serine hydroxymethyltransferase 1</fullName>
        <shortName>SHM1</shortName>
        <shortName evidence="2">SHMT 1</shortName>
        <shortName evidence="2">Serine methylase 1</shortName>
        <ecNumber evidence="2">2.1.2.1</ecNumber>
    </recommendedName>
</protein>
<organism>
    <name type="scientific">Mycobacterium tuberculosis (strain CDC 1551 / Oshkosh)</name>
    <dbReference type="NCBI Taxonomy" id="83331"/>
    <lineage>
        <taxon>Bacteria</taxon>
        <taxon>Bacillati</taxon>
        <taxon>Actinomycetota</taxon>
        <taxon>Actinomycetes</taxon>
        <taxon>Mycobacteriales</taxon>
        <taxon>Mycobacteriaceae</taxon>
        <taxon>Mycobacterium</taxon>
        <taxon>Mycobacterium tuberculosis complex</taxon>
    </lineage>
</organism>
<evidence type="ECO:0000250" key="1">
    <source>
        <dbReference type="UniProtKB" id="P9WGI9"/>
    </source>
</evidence>
<evidence type="ECO:0000255" key="2">
    <source>
        <dbReference type="HAMAP-Rule" id="MF_00051"/>
    </source>
</evidence>
<evidence type="ECO:0000305" key="3"/>
<reference key="1">
    <citation type="journal article" date="2002" name="J. Bacteriol.">
        <title>Whole-genome comparison of Mycobacterium tuberculosis clinical and laboratory strains.</title>
        <authorList>
            <person name="Fleischmann R.D."/>
            <person name="Alland D."/>
            <person name="Eisen J.A."/>
            <person name="Carpenter L."/>
            <person name="White O."/>
            <person name="Peterson J.D."/>
            <person name="DeBoy R.T."/>
            <person name="Dodson R.J."/>
            <person name="Gwinn M.L."/>
            <person name="Haft D.H."/>
            <person name="Hickey E.K."/>
            <person name="Kolonay J.F."/>
            <person name="Nelson W.C."/>
            <person name="Umayam L.A."/>
            <person name="Ermolaeva M.D."/>
            <person name="Salzberg S.L."/>
            <person name="Delcher A."/>
            <person name="Utterback T.R."/>
            <person name="Weidman J.F."/>
            <person name="Khouri H.M."/>
            <person name="Gill J."/>
            <person name="Mikula A."/>
            <person name="Bishai W."/>
            <person name="Jacobs W.R. Jr."/>
            <person name="Venter J.C."/>
            <person name="Fraser C.M."/>
        </authorList>
    </citation>
    <scope>NUCLEOTIDE SEQUENCE [LARGE SCALE GENOMIC DNA]</scope>
    <source>
        <strain>CDC 1551 / Oshkosh</strain>
    </source>
</reference>
<proteinExistence type="inferred from homology"/>
<keyword id="KW-0028">Amino-acid biosynthesis</keyword>
<keyword id="KW-0963">Cytoplasm</keyword>
<keyword id="KW-0554">One-carbon metabolism</keyword>
<keyword id="KW-0663">Pyridoxal phosphate</keyword>
<keyword id="KW-1185">Reference proteome</keyword>
<keyword id="KW-0808">Transferase</keyword>
<sequence>MTAAPDARTTAVMSAPLAEVDPDIAELLAKELGRQRDTLEMIASENFAPRAVLQAQGSVLTNKYAEGLPGRRYYGGCEHVDVVENLARDRAKALFGAEFANVQPHSGAQANAAVLHALMSPGERLLGLDLANGGHLTHGMRLNFSGKLYENGFYGVDPATHLIDMDAVRATALEFRPKVIIAGWSAYPRVLDFAAFRSIADEVGAKLLVDMAHFAGLVAAGLHPSPVPHADVVSTTVHKTLGGGRSGLIVGKQQYAKAINSAVFPGQQGGPLMHVIAGKAVALKIAATPEFADRQRRTLSGARIIADRLMAPDVAKAGVSVVSGGTDVHLVLVDLRDSPLDGQAAEDLLHEVGITVNRNAVPNDPRPPMVTSGLRIGTPALATRGFGDTEFTEVADIIATALATGSSVDVSALKDRATRLARAFPLYDGLEEWSLVGR</sequence>
<feature type="chain" id="PRO_0000428354" description="Serine hydroxymethyltransferase 1">
    <location>
        <begin position="1"/>
        <end position="438"/>
    </location>
</feature>
<feature type="binding site" evidence="2">
    <location>
        <position position="130"/>
    </location>
    <ligand>
        <name>(6S)-5,6,7,8-tetrahydrofolate</name>
        <dbReference type="ChEBI" id="CHEBI:57453"/>
    </ligand>
</feature>
<feature type="binding site" evidence="2">
    <location>
        <begin position="134"/>
        <end position="136"/>
    </location>
    <ligand>
        <name>(6S)-5,6,7,8-tetrahydrofolate</name>
        <dbReference type="ChEBI" id="CHEBI:57453"/>
    </ligand>
</feature>
<feature type="site" description="Plays an important role in substrate specificity" evidence="2">
    <location>
        <position position="238"/>
    </location>
</feature>
<feature type="modified residue" description="N6-(pyridoxal phosphate)lysine" evidence="2">
    <location>
        <position position="239"/>
    </location>
</feature>